<proteinExistence type="inferred from homology"/>
<gene>
    <name evidence="1" type="primary">pepT</name>
    <name type="ordered locus">BF1302</name>
</gene>
<dbReference type="EC" id="3.4.11.4" evidence="1"/>
<dbReference type="EMBL" id="AP006841">
    <property type="protein sequence ID" value="BAD48052.1"/>
    <property type="molecule type" value="Genomic_DNA"/>
</dbReference>
<dbReference type="RefSeq" id="WP_005786005.1">
    <property type="nucleotide sequence ID" value="NZ_UYXF01000002.1"/>
</dbReference>
<dbReference type="RefSeq" id="YP_098586.1">
    <property type="nucleotide sequence ID" value="NC_006347.1"/>
</dbReference>
<dbReference type="SMR" id="Q64WS4"/>
<dbReference type="STRING" id="295405.BF1302"/>
<dbReference type="MEROPS" id="M20.003"/>
<dbReference type="GeneID" id="60367367"/>
<dbReference type="KEGG" id="bfr:BF1302"/>
<dbReference type="PATRIC" id="fig|295405.11.peg.1285"/>
<dbReference type="HOGENOM" id="CLU_053676_0_0_10"/>
<dbReference type="OrthoDB" id="9804934at2"/>
<dbReference type="Proteomes" id="UP000002197">
    <property type="component" value="Chromosome"/>
</dbReference>
<dbReference type="GO" id="GO:0005829">
    <property type="term" value="C:cytosol"/>
    <property type="evidence" value="ECO:0007669"/>
    <property type="project" value="TreeGrafter"/>
</dbReference>
<dbReference type="GO" id="GO:0008237">
    <property type="term" value="F:metallopeptidase activity"/>
    <property type="evidence" value="ECO:0007669"/>
    <property type="project" value="UniProtKB-KW"/>
</dbReference>
<dbReference type="GO" id="GO:0045148">
    <property type="term" value="F:tripeptide aminopeptidase activity"/>
    <property type="evidence" value="ECO:0007669"/>
    <property type="project" value="UniProtKB-UniRule"/>
</dbReference>
<dbReference type="GO" id="GO:0008270">
    <property type="term" value="F:zinc ion binding"/>
    <property type="evidence" value="ECO:0007669"/>
    <property type="project" value="UniProtKB-UniRule"/>
</dbReference>
<dbReference type="GO" id="GO:0043171">
    <property type="term" value="P:peptide catabolic process"/>
    <property type="evidence" value="ECO:0007669"/>
    <property type="project" value="UniProtKB-UniRule"/>
</dbReference>
<dbReference type="GO" id="GO:0006508">
    <property type="term" value="P:proteolysis"/>
    <property type="evidence" value="ECO:0007669"/>
    <property type="project" value="UniProtKB-UniRule"/>
</dbReference>
<dbReference type="CDD" id="cd03892">
    <property type="entry name" value="M20_peptT"/>
    <property type="match status" value="1"/>
</dbReference>
<dbReference type="FunFam" id="3.30.70.360:FF:000002">
    <property type="entry name" value="Peptidase T"/>
    <property type="match status" value="1"/>
</dbReference>
<dbReference type="Gene3D" id="3.30.70.360">
    <property type="match status" value="1"/>
</dbReference>
<dbReference type="Gene3D" id="3.40.630.10">
    <property type="entry name" value="Zn peptidases"/>
    <property type="match status" value="1"/>
</dbReference>
<dbReference type="HAMAP" id="MF_00550">
    <property type="entry name" value="Aminopeptidase_M20"/>
    <property type="match status" value="1"/>
</dbReference>
<dbReference type="InterPro" id="IPR001261">
    <property type="entry name" value="ArgE/DapE_CS"/>
</dbReference>
<dbReference type="InterPro" id="IPR036264">
    <property type="entry name" value="Bact_exopeptidase_dim_dom"/>
</dbReference>
<dbReference type="InterPro" id="IPR002933">
    <property type="entry name" value="Peptidase_M20"/>
</dbReference>
<dbReference type="InterPro" id="IPR011650">
    <property type="entry name" value="Peptidase_M20_dimer"/>
</dbReference>
<dbReference type="InterPro" id="IPR010161">
    <property type="entry name" value="Peptidase_M20B"/>
</dbReference>
<dbReference type="NCBIfam" id="TIGR01882">
    <property type="entry name" value="peptidase-T"/>
    <property type="match status" value="1"/>
</dbReference>
<dbReference type="NCBIfam" id="NF003976">
    <property type="entry name" value="PRK05469.1"/>
    <property type="match status" value="1"/>
</dbReference>
<dbReference type="NCBIfam" id="NF009920">
    <property type="entry name" value="PRK13381.1"/>
    <property type="match status" value="1"/>
</dbReference>
<dbReference type="PANTHER" id="PTHR42994">
    <property type="entry name" value="PEPTIDASE T"/>
    <property type="match status" value="1"/>
</dbReference>
<dbReference type="PANTHER" id="PTHR42994:SF1">
    <property type="entry name" value="PEPTIDASE T"/>
    <property type="match status" value="1"/>
</dbReference>
<dbReference type="Pfam" id="PF07687">
    <property type="entry name" value="M20_dimer"/>
    <property type="match status" value="1"/>
</dbReference>
<dbReference type="Pfam" id="PF01546">
    <property type="entry name" value="Peptidase_M20"/>
    <property type="match status" value="1"/>
</dbReference>
<dbReference type="PIRSF" id="PIRSF037215">
    <property type="entry name" value="Peptidase_M20B"/>
    <property type="match status" value="1"/>
</dbReference>
<dbReference type="SUPFAM" id="SSF55031">
    <property type="entry name" value="Bacterial exopeptidase dimerisation domain"/>
    <property type="match status" value="1"/>
</dbReference>
<dbReference type="SUPFAM" id="SSF53187">
    <property type="entry name" value="Zn-dependent exopeptidases"/>
    <property type="match status" value="1"/>
</dbReference>
<dbReference type="PROSITE" id="PS00758">
    <property type="entry name" value="ARGE_DAPE_CPG2_1"/>
    <property type="match status" value="1"/>
</dbReference>
<dbReference type="PROSITE" id="PS00759">
    <property type="entry name" value="ARGE_DAPE_CPG2_2"/>
    <property type="match status" value="1"/>
</dbReference>
<accession>Q64WS4</accession>
<name>PEPT_BACFR</name>
<organism>
    <name type="scientific">Bacteroides fragilis (strain YCH46)</name>
    <dbReference type="NCBI Taxonomy" id="295405"/>
    <lineage>
        <taxon>Bacteria</taxon>
        <taxon>Pseudomonadati</taxon>
        <taxon>Bacteroidota</taxon>
        <taxon>Bacteroidia</taxon>
        <taxon>Bacteroidales</taxon>
        <taxon>Bacteroidaceae</taxon>
        <taxon>Bacteroides</taxon>
    </lineage>
</organism>
<comment type="function">
    <text evidence="1">Cleaves the N-terminal amino acid of tripeptides.</text>
</comment>
<comment type="catalytic activity">
    <reaction evidence="1">
        <text>Release of the N-terminal residue from a tripeptide.</text>
        <dbReference type="EC" id="3.4.11.4"/>
    </reaction>
</comment>
<comment type="cofactor">
    <cofactor evidence="1">
        <name>Zn(2+)</name>
        <dbReference type="ChEBI" id="CHEBI:29105"/>
    </cofactor>
    <text evidence="1">Binds 2 Zn(2+) ions per subunit.</text>
</comment>
<comment type="subcellular location">
    <subcellularLocation>
        <location evidence="1">Cytoplasm</location>
    </subcellularLocation>
</comment>
<comment type="similarity">
    <text evidence="1">Belongs to the peptidase M20B family.</text>
</comment>
<protein>
    <recommendedName>
        <fullName evidence="1">Peptidase T</fullName>
        <ecNumber evidence="1">3.4.11.4</ecNumber>
    </recommendedName>
    <alternativeName>
        <fullName evidence="1">Aminotripeptidase</fullName>
        <shortName evidence="1">Tripeptidase</shortName>
    </alternativeName>
    <alternativeName>
        <fullName evidence="1">Tripeptide aminopeptidase</fullName>
    </alternativeName>
</protein>
<feature type="chain" id="PRO_0000185285" description="Peptidase T">
    <location>
        <begin position="1"/>
        <end position="407"/>
    </location>
</feature>
<feature type="active site" evidence="1">
    <location>
        <position position="79"/>
    </location>
</feature>
<feature type="active site" description="Proton acceptor" evidence="1">
    <location>
        <position position="174"/>
    </location>
</feature>
<feature type="binding site" evidence="1">
    <location>
        <position position="77"/>
    </location>
    <ligand>
        <name>Zn(2+)</name>
        <dbReference type="ChEBI" id="CHEBI:29105"/>
        <label>1</label>
    </ligand>
</feature>
<feature type="binding site" evidence="1">
    <location>
        <position position="140"/>
    </location>
    <ligand>
        <name>Zn(2+)</name>
        <dbReference type="ChEBI" id="CHEBI:29105"/>
        <label>1</label>
    </ligand>
</feature>
<feature type="binding site" evidence="1">
    <location>
        <position position="140"/>
    </location>
    <ligand>
        <name>Zn(2+)</name>
        <dbReference type="ChEBI" id="CHEBI:29105"/>
        <label>2</label>
    </ligand>
</feature>
<feature type="binding site" evidence="1">
    <location>
        <position position="175"/>
    </location>
    <ligand>
        <name>Zn(2+)</name>
        <dbReference type="ChEBI" id="CHEBI:29105"/>
        <label>2</label>
    </ligand>
</feature>
<feature type="binding site" evidence="1">
    <location>
        <position position="197"/>
    </location>
    <ligand>
        <name>Zn(2+)</name>
        <dbReference type="ChEBI" id="CHEBI:29105"/>
        <label>1</label>
    </ligand>
</feature>
<feature type="binding site" evidence="1">
    <location>
        <position position="379"/>
    </location>
    <ligand>
        <name>Zn(2+)</name>
        <dbReference type="ChEBI" id="CHEBI:29105"/>
        <label>2</label>
    </ligand>
</feature>
<evidence type="ECO:0000255" key="1">
    <source>
        <dbReference type="HAMAP-Rule" id="MF_00550"/>
    </source>
</evidence>
<reference key="1">
    <citation type="journal article" date="2004" name="Proc. Natl. Acad. Sci. U.S.A.">
        <title>Genomic analysis of Bacteroides fragilis reveals extensive DNA inversions regulating cell surface adaptation.</title>
        <authorList>
            <person name="Kuwahara T."/>
            <person name="Yamashita A."/>
            <person name="Hirakawa H."/>
            <person name="Nakayama H."/>
            <person name="Toh H."/>
            <person name="Okada N."/>
            <person name="Kuhara S."/>
            <person name="Hattori M."/>
            <person name="Hayashi T."/>
            <person name="Ohnishi Y."/>
        </authorList>
    </citation>
    <scope>NUCLEOTIDE SEQUENCE [LARGE SCALE GENOMIC DNA]</scope>
    <source>
        <strain>YCH46</strain>
    </source>
</reference>
<keyword id="KW-0031">Aminopeptidase</keyword>
<keyword id="KW-0963">Cytoplasm</keyword>
<keyword id="KW-0378">Hydrolase</keyword>
<keyword id="KW-0479">Metal-binding</keyword>
<keyword id="KW-0482">Metalloprotease</keyword>
<keyword id="KW-0645">Protease</keyword>
<keyword id="KW-0862">Zinc</keyword>
<sequence length="407" mass="45485">MNLVERFLKYVSFDTQSDELTRLTPSTPGQMVFAEYLKSELESLGLEDITLDENGYLFATLPANTEKELPVIGFIAHMDTSPDMSGKNVTPRIVEKYDGSDIVLCAEENIVLSPSQFPELLDHKGEDLIVTNGKTLLGADDKAGIAEIVSAVVYLQEHPEIKHGKIRIGFNPDEEIGEGAHKFDVQKFGCEWAYTMDGGEVGELEFENFNAAAAKITFKGRNVHPGYAKHKMINSIRIANQFITMLPRHETPEHTSGYEGFYHLIGIQGDVEQSTVSYIIRDHDRNKFEDRKKEIEHLVNKINAEFGEGTATLELRDQYYNMREKIEPVMHIIDTAFAAMEAVGVKPNVKPIRGGTDGAQLSFKGLPCPNIFAGGLNFHGRYEFVPIQNMEKAMKVIVKIAELVASK</sequence>